<gene>
    <name evidence="1" type="primary">comE</name>
    <name type="ordered locus">MTH_1207</name>
</gene>
<accession>O27275</accession>
<organism>
    <name type="scientific">Methanothermobacter thermautotrophicus (strain ATCC 29096 / DSM 1053 / JCM 10044 / NBRC 100330 / Delta H)</name>
    <name type="common">Methanobacterium thermoautotrophicum</name>
    <dbReference type="NCBI Taxonomy" id="187420"/>
    <lineage>
        <taxon>Archaea</taxon>
        <taxon>Methanobacteriati</taxon>
        <taxon>Methanobacteriota</taxon>
        <taxon>Methanomada group</taxon>
        <taxon>Methanobacteria</taxon>
        <taxon>Methanobacteriales</taxon>
        <taxon>Methanobacteriaceae</taxon>
        <taxon>Methanothermobacter</taxon>
    </lineage>
</organism>
<dbReference type="EC" id="4.1.1.79" evidence="1"/>
<dbReference type="EMBL" id="AE000666">
    <property type="protein sequence ID" value="AAB85696.1"/>
    <property type="molecule type" value="Genomic_DNA"/>
</dbReference>
<dbReference type="PIR" id="B69028">
    <property type="entry name" value="B69028"/>
</dbReference>
<dbReference type="RefSeq" id="WP_010876831.1">
    <property type="nucleotide sequence ID" value="NC_000916.1"/>
</dbReference>
<dbReference type="SMR" id="O27275"/>
<dbReference type="STRING" id="187420.MTH_1207"/>
<dbReference type="PaxDb" id="187420-MTH_1207"/>
<dbReference type="EnsemblBacteria" id="AAB85696">
    <property type="protein sequence ID" value="AAB85696"/>
    <property type="gene ID" value="MTH_1207"/>
</dbReference>
<dbReference type="GeneID" id="1471615"/>
<dbReference type="GeneID" id="77401735"/>
<dbReference type="KEGG" id="mth:MTH_1207"/>
<dbReference type="PATRIC" id="fig|187420.15.peg.1185"/>
<dbReference type="HOGENOM" id="CLU_117492_1_0_2"/>
<dbReference type="InParanoid" id="O27275"/>
<dbReference type="UniPathway" id="UPA00355">
    <property type="reaction ID" value="UER00472"/>
</dbReference>
<dbReference type="Proteomes" id="UP000005223">
    <property type="component" value="Chromosome"/>
</dbReference>
<dbReference type="GO" id="GO:0050545">
    <property type="term" value="F:sulfopyruvate decarboxylase activity"/>
    <property type="evidence" value="ECO:0000250"/>
    <property type="project" value="UniProtKB"/>
</dbReference>
<dbReference type="GO" id="GO:0030976">
    <property type="term" value="F:thiamine pyrophosphate binding"/>
    <property type="evidence" value="ECO:0000250"/>
    <property type="project" value="UniProtKB"/>
</dbReference>
<dbReference type="GO" id="GO:0019295">
    <property type="term" value="P:coenzyme M biosynthetic process"/>
    <property type="evidence" value="ECO:0000250"/>
    <property type="project" value="UniProtKB"/>
</dbReference>
<dbReference type="CDD" id="cd03372">
    <property type="entry name" value="TPP_ComE"/>
    <property type="match status" value="1"/>
</dbReference>
<dbReference type="Gene3D" id="3.40.50.970">
    <property type="match status" value="1"/>
</dbReference>
<dbReference type="InterPro" id="IPR022494">
    <property type="entry name" value="Sulfopyruvate_deCO2ase_bsu"/>
</dbReference>
<dbReference type="InterPro" id="IPR029061">
    <property type="entry name" value="THDP-binding"/>
</dbReference>
<dbReference type="InterPro" id="IPR051818">
    <property type="entry name" value="TPP_dependent_decarboxylase"/>
</dbReference>
<dbReference type="InterPro" id="IPR011766">
    <property type="entry name" value="TPP_enzyme_TPP-bd"/>
</dbReference>
<dbReference type="NCBIfam" id="TIGR03846">
    <property type="entry name" value="sulfopy_beta"/>
    <property type="match status" value="1"/>
</dbReference>
<dbReference type="PANTHER" id="PTHR42818:SF1">
    <property type="entry name" value="SULFOPYRUVATE DECARBOXYLASE"/>
    <property type="match status" value="1"/>
</dbReference>
<dbReference type="PANTHER" id="PTHR42818">
    <property type="entry name" value="SULFOPYRUVATE DECARBOXYLASE SUBUNIT ALPHA"/>
    <property type="match status" value="1"/>
</dbReference>
<dbReference type="Pfam" id="PF02775">
    <property type="entry name" value="TPP_enzyme_C"/>
    <property type="match status" value="1"/>
</dbReference>
<dbReference type="SUPFAM" id="SSF52518">
    <property type="entry name" value="Thiamin diphosphate-binding fold (THDP-binding)"/>
    <property type="match status" value="1"/>
</dbReference>
<reference key="1">
    <citation type="journal article" date="1997" name="J. Bacteriol.">
        <title>Complete genome sequence of Methanobacterium thermoautotrophicum deltaH: functional analysis and comparative genomics.</title>
        <authorList>
            <person name="Smith D.R."/>
            <person name="Doucette-Stamm L.A."/>
            <person name="Deloughery C."/>
            <person name="Lee H.-M."/>
            <person name="Dubois J."/>
            <person name="Aldredge T."/>
            <person name="Bashirzadeh R."/>
            <person name="Blakely D."/>
            <person name="Cook R."/>
            <person name="Gilbert K."/>
            <person name="Harrison D."/>
            <person name="Hoang L."/>
            <person name="Keagle P."/>
            <person name="Lumm W."/>
            <person name="Pothier B."/>
            <person name="Qiu D."/>
            <person name="Spadafora R."/>
            <person name="Vicare R."/>
            <person name="Wang Y."/>
            <person name="Wierzbowski J."/>
            <person name="Gibson R."/>
            <person name="Jiwani N."/>
            <person name="Caruso A."/>
            <person name="Bush D."/>
            <person name="Safer H."/>
            <person name="Patwell D."/>
            <person name="Prabhakar S."/>
            <person name="McDougall S."/>
            <person name="Shimer G."/>
            <person name="Goyal A."/>
            <person name="Pietrovski S."/>
            <person name="Church G.M."/>
            <person name="Daniels C.J."/>
            <person name="Mao J.-I."/>
            <person name="Rice P."/>
            <person name="Noelling J."/>
            <person name="Reeve J.N."/>
        </authorList>
    </citation>
    <scope>NUCLEOTIDE SEQUENCE [LARGE SCALE GENOMIC DNA]</scope>
    <source>
        <strain>ATCC 29096 / DSM 1053 / JCM 10044 / NBRC 100330 / Delta H</strain>
    </source>
</reference>
<sequence length="185" mass="20008">MMLERIEAIERITGVLEDELVICNLGFPSRELYSIRDSPRHFYMLGSMGMASSIGLGLALSQERRVVVLDGDGSILMNLGGLVTAAAQSPGNLIIVLLDNRCYATTGSQCTYADVIDLGAVAESMGFNVIRFADDLNFEQALAMDGPVFAHVPVKPGNADVPVIDLDAEEIIERFIKEVRGATED</sequence>
<proteinExistence type="inferred from homology"/>
<protein>
    <recommendedName>
        <fullName evidence="1">Sulfopyruvate decarboxylase subunit beta</fullName>
        <ecNumber evidence="1">4.1.1.79</ecNumber>
    </recommendedName>
</protein>
<keyword id="KW-0174">Coenzyme M biosynthesis</keyword>
<keyword id="KW-0210">Decarboxylase</keyword>
<keyword id="KW-0456">Lyase</keyword>
<keyword id="KW-1185">Reference proteome</keyword>
<keyword id="KW-0786">Thiamine pyrophosphate</keyword>
<comment type="function">
    <text evidence="1">Involved in the biosynthesis of the coenzyme M (2-mercaptoethanesulfonic acid). Catalyzes the decarboxylation of sulfopyruvate to sulfoacetaldehyde.</text>
</comment>
<comment type="catalytic activity">
    <reaction evidence="1">
        <text>3-sulfopyruvate + H(+) = sulfoacetaldehyde + CO2</text>
        <dbReference type="Rhea" id="RHEA:20948"/>
        <dbReference type="ChEBI" id="CHEBI:15378"/>
        <dbReference type="ChEBI" id="CHEBI:16526"/>
        <dbReference type="ChEBI" id="CHEBI:57940"/>
        <dbReference type="ChEBI" id="CHEBI:58246"/>
        <dbReference type="EC" id="4.1.1.79"/>
    </reaction>
</comment>
<comment type="cofactor">
    <cofactor evidence="1">
        <name>thiamine diphosphate</name>
        <dbReference type="ChEBI" id="CHEBI:58937"/>
    </cofactor>
    <text evidence="1">Binds 1 thiamine pyrophosphate per subunit.</text>
</comment>
<comment type="pathway">
    <text evidence="1">Cofactor biosynthesis; coenzyme M biosynthesis; sulfoacetaldehyde from phosphoenolpyruvate and sulfite: step 4/4.</text>
</comment>
<comment type="subunit">
    <text evidence="1">Heterododecamer composed of 6 subunits alpha and 6 subunits beta.</text>
</comment>
<comment type="similarity">
    <text evidence="2">Belongs to the TPP enzyme family.</text>
</comment>
<feature type="chain" id="PRO_0000090840" description="Sulfopyruvate decarboxylase subunit beta">
    <location>
        <begin position="1"/>
        <end position="185"/>
    </location>
</feature>
<name>COME_METTH</name>
<evidence type="ECO:0000250" key="1">
    <source>
        <dbReference type="UniProtKB" id="P58416"/>
    </source>
</evidence>
<evidence type="ECO:0000305" key="2"/>